<gene>
    <name type="primary">xynY</name>
</gene>
<organism>
    <name type="scientific">Acetivibrio thermocellus</name>
    <name type="common">Hungateiclostridium thermocellum</name>
    <name type="synonym">Clostridium thermocellum</name>
    <dbReference type="NCBI Taxonomy" id="1515"/>
    <lineage>
        <taxon>Bacteria</taxon>
        <taxon>Bacillati</taxon>
        <taxon>Bacillota</taxon>
        <taxon>Clostridia</taxon>
        <taxon>Eubacteriales</taxon>
        <taxon>Oscillospiraceae</taxon>
        <taxon>Acetivibrio</taxon>
    </lineage>
</organism>
<feature type="signal peptide" evidence="2">
    <location>
        <begin position="1"/>
        <end position="26"/>
    </location>
</feature>
<feature type="chain" id="PRO_0000007972" description="Endo-1,4-beta-xylanase Y">
    <location>
        <begin position="27"/>
        <end position="1077"/>
    </location>
</feature>
<feature type="domain" description="CBM-cenC 1">
    <location>
        <begin position="33"/>
        <end position="180"/>
    </location>
</feature>
<feature type="domain" description="GH10" evidence="3">
    <location>
        <begin position="189"/>
        <end position="538"/>
    </location>
</feature>
<feature type="domain" description="CBM-cenC 2">
    <location>
        <begin position="565"/>
        <end position="714"/>
    </location>
</feature>
<feature type="domain" description="Dockerin" evidence="4">
    <location>
        <begin position="728"/>
        <end position="796"/>
    </location>
</feature>
<feature type="region of interest" description="Disordered" evidence="6">
    <location>
        <begin position="543"/>
        <end position="563"/>
    </location>
</feature>
<feature type="active site" description="Proton donor" evidence="1">
    <location>
        <position position="337"/>
    </location>
</feature>
<feature type="active site" description="Nucleophile" evidence="5">
    <location>
        <position position="460"/>
    </location>
</feature>
<feature type="strand" evidence="11">
    <location>
        <begin position="34"/>
        <end position="39"/>
    </location>
</feature>
<feature type="strand" evidence="11">
    <location>
        <begin position="42"/>
        <end position="44"/>
    </location>
</feature>
<feature type="strand" evidence="11">
    <location>
        <begin position="48"/>
        <end position="52"/>
    </location>
</feature>
<feature type="strand" evidence="11">
    <location>
        <begin position="56"/>
        <end position="60"/>
    </location>
</feature>
<feature type="helix" evidence="11">
    <location>
        <begin position="65"/>
        <end position="67"/>
    </location>
</feature>
<feature type="strand" evidence="11">
    <location>
        <begin position="70"/>
        <end position="74"/>
    </location>
</feature>
<feature type="strand" evidence="12">
    <location>
        <begin position="78"/>
        <end position="80"/>
    </location>
</feature>
<feature type="strand" evidence="11">
    <location>
        <begin position="82"/>
        <end position="86"/>
    </location>
</feature>
<feature type="turn" evidence="11">
    <location>
        <begin position="88"/>
        <end position="90"/>
    </location>
</feature>
<feature type="strand" evidence="11">
    <location>
        <begin position="96"/>
        <end position="104"/>
    </location>
</feature>
<feature type="strand" evidence="11">
    <location>
        <begin position="107"/>
        <end position="121"/>
    </location>
</feature>
<feature type="turn" evidence="11">
    <location>
        <begin position="122"/>
        <end position="124"/>
    </location>
</feature>
<feature type="strand" evidence="11">
    <location>
        <begin position="127"/>
        <end position="138"/>
    </location>
</feature>
<feature type="strand" evidence="11">
    <location>
        <begin position="143"/>
        <end position="150"/>
    </location>
</feature>
<feature type="strand" evidence="11">
    <location>
        <begin position="155"/>
        <end position="166"/>
    </location>
</feature>
<feature type="strand" evidence="11">
    <location>
        <begin position="170"/>
        <end position="179"/>
    </location>
</feature>
<feature type="helix" evidence="11">
    <location>
        <begin position="195"/>
        <end position="198"/>
    </location>
</feature>
<feature type="turn" evidence="11">
    <location>
        <begin position="199"/>
        <end position="202"/>
    </location>
</feature>
<feature type="strand" evidence="11">
    <location>
        <begin position="204"/>
        <end position="209"/>
    </location>
</feature>
<feature type="helix" evidence="11">
    <location>
        <begin position="213"/>
        <end position="215"/>
    </location>
</feature>
<feature type="helix" evidence="11">
    <location>
        <begin position="217"/>
        <end position="226"/>
    </location>
</feature>
<feature type="strand" evidence="11">
    <location>
        <begin position="228"/>
        <end position="234"/>
    </location>
</feature>
<feature type="helix" evidence="11">
    <location>
        <begin position="238"/>
        <end position="241"/>
    </location>
</feature>
<feature type="strand" evidence="11">
    <location>
        <begin position="242"/>
        <end position="248"/>
    </location>
</feature>
<feature type="strand" evidence="11">
    <location>
        <begin position="251"/>
        <end position="254"/>
    </location>
</feature>
<feature type="turn" evidence="11">
    <location>
        <begin position="257"/>
        <end position="259"/>
    </location>
</feature>
<feature type="helix" evidence="11">
    <location>
        <begin position="260"/>
        <end position="268"/>
    </location>
</feature>
<feature type="strand" evidence="11">
    <location>
        <begin position="272"/>
        <end position="279"/>
    </location>
</feature>
<feature type="strand" evidence="11">
    <location>
        <begin position="281"/>
        <end position="283"/>
    </location>
</feature>
<feature type="helix" evidence="11">
    <location>
        <begin position="286"/>
        <end position="289"/>
    </location>
</feature>
<feature type="strand" evidence="12">
    <location>
        <begin position="293"/>
        <end position="297"/>
    </location>
</feature>
<feature type="helix" evidence="11">
    <location>
        <begin position="302"/>
        <end position="323"/>
    </location>
</feature>
<feature type="strand" evidence="11">
    <location>
        <begin position="329"/>
        <end position="337"/>
    </location>
</feature>
<feature type="helix" evidence="11">
    <location>
        <begin position="343"/>
        <end position="348"/>
    </location>
</feature>
<feature type="strand" evidence="11">
    <location>
        <begin position="355"/>
        <end position="358"/>
    </location>
</feature>
<feature type="helix" evidence="11">
    <location>
        <begin position="363"/>
        <end position="368"/>
    </location>
</feature>
<feature type="helix" evidence="11">
    <location>
        <begin position="373"/>
        <end position="384"/>
    </location>
</feature>
<feature type="strand" evidence="11">
    <location>
        <begin position="390"/>
        <end position="397"/>
    </location>
</feature>
<feature type="helix" evidence="11">
    <location>
        <begin position="401"/>
        <end position="416"/>
    </location>
</feature>
<feature type="strand" evidence="11">
    <location>
        <begin position="422"/>
        <end position="425"/>
    </location>
</feature>
<feature type="strand" evidence="11">
    <location>
        <begin position="428"/>
        <end position="431"/>
    </location>
</feature>
<feature type="strand" evidence="11">
    <location>
        <begin position="433"/>
        <end position="435"/>
    </location>
</feature>
<feature type="helix" evidence="11">
    <location>
        <begin position="439"/>
        <end position="450"/>
    </location>
</feature>
<feature type="strand" evidence="11">
    <location>
        <begin position="453"/>
        <end position="464"/>
    </location>
</feature>
<feature type="turn" evidence="11">
    <location>
        <begin position="466"/>
        <end position="469"/>
    </location>
</feature>
<feature type="helix" evidence="11">
    <location>
        <begin position="472"/>
        <end position="492"/>
    </location>
</feature>
<feature type="strand" evidence="11">
    <location>
        <begin position="498"/>
        <end position="507"/>
    </location>
</feature>
<feature type="helix" evidence="11">
    <location>
        <begin position="515"/>
        <end position="517"/>
    </location>
</feature>
<feature type="strand" evidence="11">
    <location>
        <begin position="520"/>
        <end position="522"/>
    </location>
</feature>
<feature type="helix" evidence="11">
    <location>
        <begin position="530"/>
        <end position="535"/>
    </location>
</feature>
<feature type="helix" evidence="11">
    <location>
        <begin position="541"/>
        <end position="543"/>
    </location>
</feature>
<feature type="strand" evidence="8">
    <location>
        <begin position="566"/>
        <end position="571"/>
    </location>
</feature>
<feature type="strand" evidence="8">
    <location>
        <begin position="581"/>
        <end position="583"/>
    </location>
</feature>
<feature type="strand" evidence="8">
    <location>
        <begin position="587"/>
        <end position="593"/>
    </location>
</feature>
<feature type="strand" evidence="8">
    <location>
        <begin position="596"/>
        <end position="599"/>
    </location>
</feature>
<feature type="strand" evidence="8">
    <location>
        <begin position="601"/>
        <end position="605"/>
    </location>
</feature>
<feature type="strand" evidence="8">
    <location>
        <begin position="613"/>
        <end position="618"/>
    </location>
</feature>
<feature type="turn" evidence="8">
    <location>
        <begin position="620"/>
        <end position="622"/>
    </location>
</feature>
<feature type="strand" evidence="8">
    <location>
        <begin position="628"/>
        <end position="636"/>
    </location>
</feature>
<feature type="strand" evidence="8">
    <location>
        <begin position="639"/>
        <end position="642"/>
    </location>
</feature>
<feature type="strand" evidence="8">
    <location>
        <begin position="644"/>
        <end position="653"/>
    </location>
</feature>
<feature type="strand" evidence="8">
    <location>
        <begin position="659"/>
        <end position="669"/>
    </location>
</feature>
<feature type="strand" evidence="8">
    <location>
        <begin position="675"/>
        <end position="683"/>
    </location>
</feature>
<feature type="strand" evidence="8">
    <location>
        <begin position="689"/>
        <end position="699"/>
    </location>
</feature>
<feature type="strand" evidence="8">
    <location>
        <begin position="704"/>
        <end position="713"/>
    </location>
</feature>
<feature type="strand" evidence="10">
    <location>
        <begin position="738"/>
        <end position="740"/>
    </location>
</feature>
<feature type="helix" evidence="10">
    <location>
        <begin position="743"/>
        <end position="753"/>
    </location>
</feature>
<feature type="helix" evidence="10">
    <location>
        <begin position="761"/>
        <end position="767"/>
    </location>
</feature>
<feature type="helix" evidence="10">
    <location>
        <begin position="777"/>
        <end position="787"/>
    </location>
</feature>
<feature type="helix" evidence="9">
    <location>
        <begin position="817"/>
        <end position="820"/>
    </location>
</feature>
<feature type="strand" evidence="9">
    <location>
        <begin position="828"/>
        <end position="836"/>
    </location>
</feature>
<feature type="strand" evidence="9">
    <location>
        <begin position="839"/>
        <end position="847"/>
    </location>
</feature>
<feature type="strand" evidence="9">
    <location>
        <begin position="858"/>
        <end position="863"/>
    </location>
</feature>
<feature type="turn" evidence="9">
    <location>
        <begin position="876"/>
        <end position="878"/>
    </location>
</feature>
<feature type="helix" evidence="9">
    <location>
        <begin position="880"/>
        <end position="889"/>
    </location>
</feature>
<feature type="strand" evidence="9">
    <location>
        <begin position="896"/>
        <end position="900"/>
    </location>
</feature>
<feature type="turn" evidence="9">
    <location>
        <begin position="910"/>
        <end position="912"/>
    </location>
</feature>
<feature type="helix" evidence="9">
    <location>
        <begin position="913"/>
        <end position="919"/>
    </location>
</feature>
<feature type="helix" evidence="9">
    <location>
        <begin position="921"/>
        <end position="928"/>
    </location>
</feature>
<feature type="strand" evidence="13">
    <location>
        <begin position="934"/>
        <end position="937"/>
    </location>
</feature>
<feature type="helix" evidence="9">
    <location>
        <begin position="938"/>
        <end position="942"/>
    </location>
</feature>
<feature type="helix" evidence="9">
    <location>
        <begin position="943"/>
        <end position="947"/>
    </location>
</feature>
<feature type="strand" evidence="9">
    <location>
        <begin position="948"/>
        <end position="953"/>
    </location>
</feature>
<feature type="helix" evidence="9">
    <location>
        <begin position="955"/>
        <end position="967"/>
    </location>
</feature>
<feature type="turn" evidence="9">
    <location>
        <begin position="968"/>
        <end position="970"/>
    </location>
</feature>
<feature type="strand" evidence="9">
    <location>
        <begin position="973"/>
        <end position="978"/>
    </location>
</feature>
<feature type="strand" evidence="9">
    <location>
        <begin position="983"/>
        <end position="986"/>
    </location>
</feature>
<feature type="helix" evidence="9">
    <location>
        <begin position="987"/>
        <end position="1001"/>
    </location>
</feature>
<feature type="strand" evidence="9">
    <location>
        <begin position="1009"/>
        <end position="1015"/>
    </location>
</feature>
<feature type="helix" evidence="9">
    <location>
        <begin position="1021"/>
        <end position="1032"/>
    </location>
</feature>
<feature type="strand" evidence="9">
    <location>
        <begin position="1039"/>
        <end position="1041"/>
    </location>
</feature>
<feature type="turn" evidence="9">
    <location>
        <begin position="1043"/>
        <end position="1045"/>
    </location>
</feature>
<feature type="strand" evidence="9">
    <location>
        <begin position="1048"/>
        <end position="1053"/>
    </location>
</feature>
<feature type="helix" evidence="9">
    <location>
        <begin position="1060"/>
        <end position="1070"/>
    </location>
</feature>
<feature type="helix" evidence="9">
    <location>
        <begin position="1071"/>
        <end position="1073"/>
    </location>
</feature>
<evidence type="ECO:0000250" key="1"/>
<evidence type="ECO:0000255" key="2"/>
<evidence type="ECO:0000255" key="3">
    <source>
        <dbReference type="PROSITE-ProRule" id="PRU01096"/>
    </source>
</evidence>
<evidence type="ECO:0000255" key="4">
    <source>
        <dbReference type="PROSITE-ProRule" id="PRU01102"/>
    </source>
</evidence>
<evidence type="ECO:0000255" key="5">
    <source>
        <dbReference type="PROSITE-ProRule" id="PRU10061"/>
    </source>
</evidence>
<evidence type="ECO:0000256" key="6">
    <source>
        <dbReference type="SAM" id="MobiDB-lite"/>
    </source>
</evidence>
<evidence type="ECO:0000305" key="7"/>
<evidence type="ECO:0007829" key="8">
    <source>
        <dbReference type="PDB" id="1DYO"/>
    </source>
</evidence>
<evidence type="ECO:0007829" key="9">
    <source>
        <dbReference type="PDB" id="1GKL"/>
    </source>
</evidence>
<evidence type="ECO:0007829" key="10">
    <source>
        <dbReference type="PDB" id="2CCL"/>
    </source>
</evidence>
<evidence type="ECO:0007829" key="11">
    <source>
        <dbReference type="PDB" id="2W5F"/>
    </source>
</evidence>
<evidence type="ECO:0007829" key="12">
    <source>
        <dbReference type="PDB" id="2WYS"/>
    </source>
</evidence>
<evidence type="ECO:0007829" key="13">
    <source>
        <dbReference type="PDB" id="3ZI7"/>
    </source>
</evidence>
<proteinExistence type="evidence at protein level"/>
<dbReference type="EC" id="3.2.1.8"/>
<dbReference type="EMBL" id="X83269">
    <property type="protein sequence ID" value="CAA58242.1"/>
    <property type="molecule type" value="Genomic_DNA"/>
</dbReference>
<dbReference type="PIR" id="S54975">
    <property type="entry name" value="S54975"/>
</dbReference>
<dbReference type="PDB" id="1DYO">
    <property type="method" value="X-ray"/>
    <property type="resolution" value="2.10 A"/>
    <property type="chains" value="A/B=558-718"/>
</dbReference>
<dbReference type="PDB" id="1GKK">
    <property type="method" value="X-ray"/>
    <property type="resolution" value="1.60 A"/>
    <property type="chains" value="A/B=792-1077"/>
</dbReference>
<dbReference type="PDB" id="1GKL">
    <property type="method" value="X-ray"/>
    <property type="resolution" value="1.40 A"/>
    <property type="chains" value="A/B=792-1077"/>
</dbReference>
<dbReference type="PDB" id="1H6X">
    <property type="method" value="X-ray"/>
    <property type="resolution" value="2.23 A"/>
    <property type="chains" value="A=560-720"/>
</dbReference>
<dbReference type="PDB" id="1H6Y">
    <property type="method" value="X-ray"/>
    <property type="resolution" value="2.12 A"/>
    <property type="chains" value="A/B=560-720"/>
</dbReference>
<dbReference type="PDB" id="1OHZ">
    <property type="method" value="X-ray"/>
    <property type="resolution" value="2.20 A"/>
    <property type="chains" value="B=733-791"/>
</dbReference>
<dbReference type="PDB" id="1WB4">
    <property type="method" value="X-ray"/>
    <property type="resolution" value="1.40 A"/>
    <property type="chains" value="A/B=792-1077"/>
</dbReference>
<dbReference type="PDB" id="1WB5">
    <property type="method" value="X-ray"/>
    <property type="resolution" value="1.40 A"/>
    <property type="chains" value="A/B=792-1077"/>
</dbReference>
<dbReference type="PDB" id="1WB6">
    <property type="method" value="X-ray"/>
    <property type="resolution" value="1.40 A"/>
    <property type="chains" value="A/B=792-1077"/>
</dbReference>
<dbReference type="PDB" id="2CCL">
    <property type="method" value="X-ray"/>
    <property type="resolution" value="2.03 A"/>
    <property type="chains" value="B/D=730-791"/>
</dbReference>
<dbReference type="PDB" id="2W5F">
    <property type="method" value="X-ray"/>
    <property type="resolution" value="1.90 A"/>
    <property type="chains" value="A/B=32-551"/>
</dbReference>
<dbReference type="PDB" id="2WYS">
    <property type="method" value="X-ray"/>
    <property type="resolution" value="2.75 A"/>
    <property type="chains" value="A/B=33-551"/>
</dbReference>
<dbReference type="PDB" id="2WZE">
    <property type="method" value="X-ray"/>
    <property type="resolution" value="2.50 A"/>
    <property type="chains" value="A/B=33-551"/>
</dbReference>
<dbReference type="PDB" id="3ZI7">
    <property type="method" value="X-ray"/>
    <property type="resolution" value="2.30 A"/>
    <property type="chains" value="A/B=792-1077"/>
</dbReference>
<dbReference type="PDB" id="4BAG">
    <property type="method" value="X-ray"/>
    <property type="resolution" value="1.90 A"/>
    <property type="chains" value="A/B=792-1077"/>
</dbReference>
<dbReference type="PDB" id="4H35">
    <property type="method" value="X-ray"/>
    <property type="resolution" value="1.90 A"/>
    <property type="chains" value="A/B=792-1077"/>
</dbReference>
<dbReference type="PDB" id="5FXM">
    <property type="method" value="X-ray"/>
    <property type="resolution" value="1.99 A"/>
    <property type="chains" value="A=792-1077"/>
</dbReference>
<dbReference type="PDB" id="6FJ4">
    <property type="method" value="X-ray"/>
    <property type="resolution" value="1.70 A"/>
    <property type="chains" value="A=803-1077"/>
</dbReference>
<dbReference type="PDB" id="6Y8G">
    <property type="method" value="X-ray"/>
    <property type="resolution" value="1.80 A"/>
    <property type="chains" value="AAA/BBB=792-1077"/>
</dbReference>
<dbReference type="PDBsum" id="1DYO"/>
<dbReference type="PDBsum" id="1GKK"/>
<dbReference type="PDBsum" id="1GKL"/>
<dbReference type="PDBsum" id="1H6X"/>
<dbReference type="PDBsum" id="1H6Y"/>
<dbReference type="PDBsum" id="1OHZ"/>
<dbReference type="PDBsum" id="1WB4"/>
<dbReference type="PDBsum" id="1WB5"/>
<dbReference type="PDBsum" id="1WB6"/>
<dbReference type="PDBsum" id="2CCL"/>
<dbReference type="PDBsum" id="2W5F"/>
<dbReference type="PDBsum" id="2WYS"/>
<dbReference type="PDBsum" id="2WZE"/>
<dbReference type="PDBsum" id="3ZI7"/>
<dbReference type="PDBsum" id="4BAG"/>
<dbReference type="PDBsum" id="4H35"/>
<dbReference type="PDBsum" id="5FXM"/>
<dbReference type="PDBsum" id="6FJ4"/>
<dbReference type="PDBsum" id="6Y8G"/>
<dbReference type="SMR" id="P51584"/>
<dbReference type="DIP" id="DIP-35413N"/>
<dbReference type="IntAct" id="P51584">
    <property type="interactions" value="1"/>
</dbReference>
<dbReference type="DrugBank" id="DB04522">
    <property type="generic name" value="Dexfosfoserine"/>
</dbReference>
<dbReference type="DrugBank" id="DB07767">
    <property type="generic name" value="Ferulic acid"/>
</dbReference>
<dbReference type="DrugBank" id="DB08711">
    <property type="generic name" value="Methyl vanillate"/>
</dbReference>
<dbReference type="DrugBank" id="DB08587">
    <property type="generic name" value="Sinapic acid"/>
</dbReference>
<dbReference type="DrugBank" id="DB08589">
    <property type="generic name" value="SYRINGATE"/>
</dbReference>
<dbReference type="CAZy" id="CBM22">
    <property type="family name" value="Carbohydrate-Binding Module Family 22"/>
</dbReference>
<dbReference type="CAZy" id="GH10">
    <property type="family name" value="Glycoside Hydrolase Family 10"/>
</dbReference>
<dbReference type="ESTHER" id="clotm-xyny">
    <property type="family name" value="A85-Feruloyl-Esterase"/>
</dbReference>
<dbReference type="BRENDA" id="3.2.1.8">
    <property type="organism ID" value="1530"/>
</dbReference>
<dbReference type="EvolutionaryTrace" id="P51584"/>
<dbReference type="GO" id="GO:0043263">
    <property type="term" value="C:cellulosome"/>
    <property type="evidence" value="ECO:0000314"/>
    <property type="project" value="MENGO"/>
</dbReference>
<dbReference type="GO" id="GO:0031176">
    <property type="term" value="F:endo-1,4-beta-xylanase activity"/>
    <property type="evidence" value="ECO:0007669"/>
    <property type="project" value="UniProtKB-EC"/>
</dbReference>
<dbReference type="GO" id="GO:0045493">
    <property type="term" value="P:xylan catabolic process"/>
    <property type="evidence" value="ECO:0007669"/>
    <property type="project" value="UniProtKB-KW"/>
</dbReference>
<dbReference type="CDD" id="cd14256">
    <property type="entry name" value="Dockerin_I"/>
    <property type="match status" value="1"/>
</dbReference>
<dbReference type="FunFam" id="3.20.20.80:FF:000350">
    <property type="entry name" value="Endo-1,4-beta-xylanase Y"/>
    <property type="match status" value="1"/>
</dbReference>
<dbReference type="Gene3D" id="3.40.50.1820">
    <property type="entry name" value="alpha/beta hydrolase"/>
    <property type="match status" value="1"/>
</dbReference>
<dbReference type="Gene3D" id="1.10.1330.10">
    <property type="entry name" value="Dockerin domain"/>
    <property type="match status" value="1"/>
</dbReference>
<dbReference type="Gene3D" id="2.60.120.260">
    <property type="entry name" value="Galactose-binding domain-like"/>
    <property type="match status" value="2"/>
</dbReference>
<dbReference type="Gene3D" id="3.20.20.80">
    <property type="entry name" value="Glycosidases"/>
    <property type="match status" value="1"/>
</dbReference>
<dbReference type="InterPro" id="IPR029058">
    <property type="entry name" value="AB_hydrolase_fold"/>
</dbReference>
<dbReference type="InterPro" id="IPR003305">
    <property type="entry name" value="CenC_carb-bd"/>
</dbReference>
<dbReference type="InterPro" id="IPR002105">
    <property type="entry name" value="Dockerin_1_rpt"/>
</dbReference>
<dbReference type="InterPro" id="IPR016134">
    <property type="entry name" value="Dockerin_dom"/>
</dbReference>
<dbReference type="InterPro" id="IPR036439">
    <property type="entry name" value="Dockerin_dom_sf"/>
</dbReference>
<dbReference type="InterPro" id="IPR018247">
    <property type="entry name" value="EF_Hand_1_Ca_BS"/>
</dbReference>
<dbReference type="InterPro" id="IPR000801">
    <property type="entry name" value="Esterase-like"/>
</dbReference>
<dbReference type="InterPro" id="IPR008979">
    <property type="entry name" value="Galactose-bd-like_sf"/>
</dbReference>
<dbReference type="InterPro" id="IPR044846">
    <property type="entry name" value="GH10"/>
</dbReference>
<dbReference type="InterPro" id="IPR031158">
    <property type="entry name" value="GH10_AS"/>
</dbReference>
<dbReference type="InterPro" id="IPR001000">
    <property type="entry name" value="GH10_dom"/>
</dbReference>
<dbReference type="InterPro" id="IPR017853">
    <property type="entry name" value="Glycoside_hydrolase_SF"/>
</dbReference>
<dbReference type="PANTHER" id="PTHR31490:SF88">
    <property type="entry name" value="BETA-XYLANASE"/>
    <property type="match status" value="1"/>
</dbReference>
<dbReference type="PANTHER" id="PTHR31490">
    <property type="entry name" value="GLYCOSYL HYDROLASE"/>
    <property type="match status" value="1"/>
</dbReference>
<dbReference type="Pfam" id="PF02018">
    <property type="entry name" value="CBM_4_9"/>
    <property type="match status" value="2"/>
</dbReference>
<dbReference type="Pfam" id="PF00404">
    <property type="entry name" value="Dockerin_1"/>
    <property type="match status" value="1"/>
</dbReference>
<dbReference type="Pfam" id="PF00756">
    <property type="entry name" value="Esterase"/>
    <property type="match status" value="1"/>
</dbReference>
<dbReference type="Pfam" id="PF00331">
    <property type="entry name" value="Glyco_hydro_10"/>
    <property type="match status" value="1"/>
</dbReference>
<dbReference type="PRINTS" id="PR00134">
    <property type="entry name" value="GLHYDRLASE10"/>
</dbReference>
<dbReference type="SMART" id="SM00633">
    <property type="entry name" value="Glyco_10"/>
    <property type="match status" value="1"/>
</dbReference>
<dbReference type="SUPFAM" id="SSF51445">
    <property type="entry name" value="(Trans)glycosidases"/>
    <property type="match status" value="1"/>
</dbReference>
<dbReference type="SUPFAM" id="SSF53474">
    <property type="entry name" value="alpha/beta-Hydrolases"/>
    <property type="match status" value="1"/>
</dbReference>
<dbReference type="SUPFAM" id="SSF49785">
    <property type="entry name" value="Galactose-binding domain-like"/>
    <property type="match status" value="2"/>
</dbReference>
<dbReference type="SUPFAM" id="SSF63446">
    <property type="entry name" value="Type I dockerin domain"/>
    <property type="match status" value="1"/>
</dbReference>
<dbReference type="PROSITE" id="PS00448">
    <property type="entry name" value="CLOS_CELLULOSOME_RPT"/>
    <property type="match status" value="2"/>
</dbReference>
<dbReference type="PROSITE" id="PS51766">
    <property type="entry name" value="DOCKERIN"/>
    <property type="match status" value="1"/>
</dbReference>
<dbReference type="PROSITE" id="PS00018">
    <property type="entry name" value="EF_HAND_1"/>
    <property type="match status" value="2"/>
</dbReference>
<dbReference type="PROSITE" id="PS00591">
    <property type="entry name" value="GH10_1"/>
    <property type="match status" value="1"/>
</dbReference>
<dbReference type="PROSITE" id="PS51760">
    <property type="entry name" value="GH10_2"/>
    <property type="match status" value="1"/>
</dbReference>
<name>XYNY_ACETH</name>
<keyword id="KW-0002">3D-structure</keyword>
<keyword id="KW-0119">Carbohydrate metabolism</keyword>
<keyword id="KW-0326">Glycosidase</keyword>
<keyword id="KW-0378">Hydrolase</keyword>
<keyword id="KW-0624">Polysaccharide degradation</keyword>
<keyword id="KW-0677">Repeat</keyword>
<keyword id="KW-0732">Signal</keyword>
<keyword id="KW-0858">Xylan degradation</keyword>
<comment type="catalytic activity">
    <reaction>
        <text>Endohydrolysis of (1-&gt;4)-beta-D-xylosidic linkages in xylans.</text>
        <dbReference type="EC" id="3.2.1.8"/>
    </reaction>
</comment>
<comment type="biophysicochemical properties">
    <phDependence>
        <text>Optimum pH is 6.8.</text>
    </phDependence>
    <temperatureDependence>
        <text>Optimum temperature is 75 degrees Celsius.</text>
    </temperatureDependence>
</comment>
<comment type="interaction">
    <interactant intactId="EBI-1037473">
        <id>P51584</id>
    </interactant>
    <interactant intactId="EBI-687595">
        <id>Q06851</id>
        <label>cipA</label>
    </interactant>
    <organismsDiffer>true</organismsDiffer>
    <experiments>5</experiments>
</comment>
<comment type="similarity">
    <text evidence="7">Belongs to the glycosyl hydrolase 10 (cellulase F) family.</text>
</comment>
<accession>P51584</accession>
<sequence>MKNKRVLAKITALVVLLGVFFVLPSNISQLYADYEVVHDTFEVNFDGWCNLGVDTYLTAVENEGNNGTRGMMVINRSSASDGAYSEKGFYLDGGVEYKYSVFVKHNGTGTETFKLSVSYLDSETEEENKEVIATKDVVAGEWTEISAKYKAPKTAVNITLSITTDSTVDFIFDDVTITRKGMAEANTVYAANAVLKDMYANYFRVGSVLNSGTVNNSSIKALILREFNSITCENEMKPDATLVQSGSTNTNIRVSLNRAASILNFCAQNNIAVRGHTLVWHSQTPQWFFKDNFQDNGNWVSQSVMDQRLESYIKNMFAEIQRQYPSLNLYAYDVVNEAVSDDANRTRYYGGAREPGYGNGRSPWVQIYGDNKFIEKAFTYARKYAPANCKLYYNDYNEYWDHKRDCIASICANLYNKGLLDGVGMQSHINADMNGFSGIQNYKAALQKYINIGCDVQITELDISTENGKFSLQQQADKYKAVFQAAVDINRTSSKGKVTAVCVWGPNDANTWLGSQNAPLLFNANNQPKPAYNAVASIIPQSEWGDGNNPAGGGGGGKPEEPDANGYYYHDTFEGSVGQWTARGPAEVLLSGRTAYKGSESLLVRNRTAAWNGAQRALNPRTFVPGNTYCFSVVASFIEGASSTTFCMKLQYVDGSGTQRYDTIDMKTVGPNQWVHLYNPQYRIPSDATDMYVYVETADDTINFYIDEAIGAVAGTVIEGPAPQPTQPPVLLGDVNGDGTINSTDLTMLKRSVLRAITLTDDAKARADVDKNGSINSTDVLLLSRYLLRVIDKFPVAENPSSSFKYESAVQYRPAPDSYLNPCPQAGRIVKETYTGINGTKSLNVYLPYGYDPNKKYNIFYLMHGGGENENTIFSNDVKLQNILDHAIMNGELEPLIVVTPTFNGGNCTAQNFYQEFRQNVIPFVESKYSTYAESTTPQGIAASRMHRGFGGFSMGGLTTWYVMVNCLDYVAYFMPLSGDYWYGNSPQDKANSIAEAINRSGLSKREYFVFAATGSDHIAYANMNPQIEAMKALPHFDYTSDFSKGNFYFLVAPGATHWWGYVRHYIYDALPYFFHE</sequence>
<protein>
    <recommendedName>
        <fullName>Endo-1,4-beta-xylanase Y</fullName>
        <shortName>Xylanase Y</shortName>
        <ecNumber>3.2.1.8</ecNumber>
    </recommendedName>
    <alternativeName>
        <fullName>1,4-beta-D-xylan xylanohydrolase Y</fullName>
        <shortName>XylY</shortName>
    </alternativeName>
</protein>
<reference key="1">
    <citation type="journal article" date="1995" name="Biochem. J.">
        <title>Evidence for a general role for non-catalytic thermostabilizing domains in xylanases from thermophilic bacteria.</title>
        <authorList>
            <person name="Fontes C.M.G.A."/>
            <person name="Hazelwood G.P."/>
            <person name="Morag E."/>
            <person name="Hall J."/>
            <person name="Hirst B.H."/>
            <person name="Gilbert H.J."/>
        </authorList>
    </citation>
    <scope>NUCLEOTIDE SEQUENCE [GENOMIC DNA]</scope>
    <source>
        <strain>YS</strain>
    </source>
</reference>